<reference key="1">
    <citation type="journal article" date="1992" name="Proc. Natl. Acad. Sci. U.S.A.">
        <title>Primary structures of chicken cone visual pigments: vertebrate rhodopsins have evolved out of cone visual pigments.</title>
        <authorList>
            <person name="Okano T."/>
            <person name="Kojima D."/>
            <person name="Fukada Y."/>
            <person name="Shichida Y."/>
            <person name="Yoshizawa T."/>
        </authorList>
    </citation>
    <scope>NUCLEOTIDE SEQUENCE [MRNA]</scope>
    <scope>PROTEIN SEQUENCE OF 304-318</scope>
    <source>
        <tissue>Retina</tissue>
    </source>
</reference>
<comment type="function">
    <text>Visual pigments are the light-absorbing molecules that mediate vision. They consist of an apoprotein, opsin, covalently linked to cis-retinal.</text>
</comment>
<comment type="biophysicochemical properties">
    <absorption>
        <max>455 nm</max>
    </absorption>
</comment>
<comment type="subcellular location">
    <subcellularLocation>
        <location>Membrane</location>
        <topology>Multi-pass membrane protein</topology>
    </subcellularLocation>
</comment>
<comment type="tissue specificity">
    <text>The color pigments are found in the cone photoreceptor cells.</text>
</comment>
<comment type="PTM">
    <text>Phosphorylated on some or all of the serine and threonine residues present in the C-terminal region.</text>
</comment>
<comment type="similarity">
    <text evidence="3">Belongs to the G-protein coupled receptor 1 family. Opsin subfamily.</text>
</comment>
<proteinExistence type="evidence at protein level"/>
<sequence>MHPPRPTTDLPEDFYIPMALDAPNITALSPFLVPQTHLGSPGLFRAMAAFMFLLIALGVPINTLTIFCTARFRKLRSHLNYILVNLALANLLVILVGSTTACYSFSQMYFALGPTACKIEGFAATLGGMVSLWSLAVVAFERFLVICKPLGNFTFRGSHAVLGCVATWVLGFVASAPPLFGWSRYIPEGLQCSCGPDWYTTDNKWHNESYVLFLFTFCFGVPLAIIVFSYGRLLITLRAVARQQEQSATTQKADREVTKMVVVMVLGFLVCWAPYTAFALWVVTHRGRSFEVGLASIPSVFSKSSTVYNPVIYVLMNKQFRSCMLKLLFCGRSPFGDDEDVSGSSQATQVSSVSSSHVAPA</sequence>
<evidence type="ECO:0000250" key="1"/>
<evidence type="ECO:0000255" key="2"/>
<evidence type="ECO:0000255" key="3">
    <source>
        <dbReference type="PROSITE-ProRule" id="PRU00521"/>
    </source>
</evidence>
<evidence type="ECO:0000256" key="4">
    <source>
        <dbReference type="SAM" id="MobiDB-lite"/>
    </source>
</evidence>
<evidence type="ECO:0000305" key="5"/>
<accession>P28682</accession>
<name>OPSB_CHICK</name>
<dbReference type="EMBL" id="M92037">
    <property type="protein sequence ID" value="AAA48633.1"/>
    <property type="molecule type" value="mRNA"/>
</dbReference>
<dbReference type="PIR" id="B46137">
    <property type="entry name" value="B46137"/>
</dbReference>
<dbReference type="RefSeq" id="NP_990848.1">
    <property type="nucleotide sequence ID" value="NM_205517.2"/>
</dbReference>
<dbReference type="SMR" id="P28682"/>
<dbReference type="FunCoup" id="P28682">
    <property type="interactions" value="112"/>
</dbReference>
<dbReference type="GlyGen" id="P28682">
    <property type="glycosylation" value="2 sites"/>
</dbReference>
<dbReference type="GeneID" id="396525"/>
<dbReference type="KEGG" id="gga:396525"/>
<dbReference type="CTD" id="396525"/>
<dbReference type="VEuPathDB" id="HostDB:geneid_396525"/>
<dbReference type="InParanoid" id="P28682"/>
<dbReference type="OMA" id="LTIACTM"/>
<dbReference type="OrthoDB" id="8545112at2759"/>
<dbReference type="PhylomeDB" id="P28682"/>
<dbReference type="PRO" id="PR:P28682"/>
<dbReference type="Proteomes" id="UP000000539">
    <property type="component" value="Unassembled WGS sequence"/>
</dbReference>
<dbReference type="GO" id="GO:0001750">
    <property type="term" value="C:photoreceptor outer segment"/>
    <property type="evidence" value="ECO:0000318"/>
    <property type="project" value="GO_Central"/>
</dbReference>
<dbReference type="GO" id="GO:0005886">
    <property type="term" value="C:plasma membrane"/>
    <property type="evidence" value="ECO:0000318"/>
    <property type="project" value="GO_Central"/>
</dbReference>
<dbReference type="GO" id="GO:0008020">
    <property type="term" value="F:G protein-coupled photoreceptor activity"/>
    <property type="evidence" value="ECO:0000318"/>
    <property type="project" value="GO_Central"/>
</dbReference>
<dbReference type="GO" id="GO:0016038">
    <property type="term" value="P:absorption of visible light"/>
    <property type="evidence" value="ECO:0000314"/>
    <property type="project" value="AgBase"/>
</dbReference>
<dbReference type="GO" id="GO:0071482">
    <property type="term" value="P:cellular response to light stimulus"/>
    <property type="evidence" value="ECO:0000318"/>
    <property type="project" value="GO_Central"/>
</dbReference>
<dbReference type="GO" id="GO:0007186">
    <property type="term" value="P:G protein-coupled receptor signaling pathway"/>
    <property type="evidence" value="ECO:0000318"/>
    <property type="project" value="GO_Central"/>
</dbReference>
<dbReference type="GO" id="GO:0007602">
    <property type="term" value="P:phototransduction"/>
    <property type="evidence" value="ECO:0000318"/>
    <property type="project" value="GO_Central"/>
</dbReference>
<dbReference type="GO" id="GO:0007601">
    <property type="term" value="P:visual perception"/>
    <property type="evidence" value="ECO:0007669"/>
    <property type="project" value="UniProtKB-KW"/>
</dbReference>
<dbReference type="CDD" id="cd15077">
    <property type="entry name" value="7tmA_SWS2_opsin"/>
    <property type="match status" value="1"/>
</dbReference>
<dbReference type="FunFam" id="1.20.1070.10:FF:000018">
    <property type="entry name" value="Rhodopsin"/>
    <property type="match status" value="1"/>
</dbReference>
<dbReference type="Gene3D" id="1.20.1070.10">
    <property type="entry name" value="Rhodopsin 7-helix transmembrane proteins"/>
    <property type="match status" value="1"/>
</dbReference>
<dbReference type="InterPro" id="IPR050125">
    <property type="entry name" value="GPCR_opsins"/>
</dbReference>
<dbReference type="InterPro" id="IPR000276">
    <property type="entry name" value="GPCR_Rhodpsn"/>
</dbReference>
<dbReference type="InterPro" id="IPR017452">
    <property type="entry name" value="GPCR_Rhodpsn_7TM"/>
</dbReference>
<dbReference type="InterPro" id="IPR001760">
    <property type="entry name" value="Opsin"/>
</dbReference>
<dbReference type="InterPro" id="IPR001521">
    <property type="entry name" value="Opsin_blue"/>
</dbReference>
<dbReference type="InterPro" id="IPR027430">
    <property type="entry name" value="Retinal_BS"/>
</dbReference>
<dbReference type="PANTHER" id="PTHR24240">
    <property type="entry name" value="OPSIN"/>
    <property type="match status" value="1"/>
</dbReference>
<dbReference type="Pfam" id="PF00001">
    <property type="entry name" value="7tm_1"/>
    <property type="match status" value="1"/>
</dbReference>
<dbReference type="PRINTS" id="PR00237">
    <property type="entry name" value="GPCRRHODOPSN"/>
</dbReference>
<dbReference type="PRINTS" id="PR00238">
    <property type="entry name" value="OPSIN"/>
</dbReference>
<dbReference type="PRINTS" id="PR00574">
    <property type="entry name" value="OPSINBLUE"/>
</dbReference>
<dbReference type="SUPFAM" id="SSF81321">
    <property type="entry name" value="Family A G protein-coupled receptor-like"/>
    <property type="match status" value="1"/>
</dbReference>
<dbReference type="PROSITE" id="PS00237">
    <property type="entry name" value="G_PROTEIN_RECEP_F1_1"/>
    <property type="match status" value="1"/>
</dbReference>
<dbReference type="PROSITE" id="PS50262">
    <property type="entry name" value="G_PROTEIN_RECEP_F1_2"/>
    <property type="match status" value="1"/>
</dbReference>
<dbReference type="PROSITE" id="PS00238">
    <property type="entry name" value="OPSIN"/>
    <property type="match status" value="1"/>
</dbReference>
<keyword id="KW-0157">Chromophore</keyword>
<keyword id="KW-0903">Direct protein sequencing</keyword>
<keyword id="KW-1015">Disulfide bond</keyword>
<keyword id="KW-0297">G-protein coupled receptor</keyword>
<keyword id="KW-0325">Glycoprotein</keyword>
<keyword id="KW-0472">Membrane</keyword>
<keyword id="KW-0597">Phosphoprotein</keyword>
<keyword id="KW-0600">Photoreceptor protein</keyword>
<keyword id="KW-0675">Receptor</keyword>
<keyword id="KW-1185">Reference proteome</keyword>
<keyword id="KW-0681">Retinal protein</keyword>
<keyword id="KW-0716">Sensory transduction</keyword>
<keyword id="KW-0807">Transducer</keyword>
<keyword id="KW-0812">Transmembrane</keyword>
<keyword id="KW-1133">Transmembrane helix</keyword>
<keyword id="KW-0844">Vision</keyword>
<organism>
    <name type="scientific">Gallus gallus</name>
    <name type="common">Chicken</name>
    <dbReference type="NCBI Taxonomy" id="9031"/>
    <lineage>
        <taxon>Eukaryota</taxon>
        <taxon>Metazoa</taxon>
        <taxon>Chordata</taxon>
        <taxon>Craniata</taxon>
        <taxon>Vertebrata</taxon>
        <taxon>Euteleostomi</taxon>
        <taxon>Archelosauria</taxon>
        <taxon>Archosauria</taxon>
        <taxon>Dinosauria</taxon>
        <taxon>Saurischia</taxon>
        <taxon>Theropoda</taxon>
        <taxon>Coelurosauria</taxon>
        <taxon>Aves</taxon>
        <taxon>Neognathae</taxon>
        <taxon>Galloanserae</taxon>
        <taxon>Galliformes</taxon>
        <taxon>Phasianidae</taxon>
        <taxon>Phasianinae</taxon>
        <taxon>Gallus</taxon>
    </lineage>
</organism>
<protein>
    <recommendedName>
        <fullName>Blue-sensitive opsin</fullName>
    </recommendedName>
    <alternativeName>
        <fullName>Blue cone photoreceptor pigment</fullName>
    </alternativeName>
</protein>
<feature type="chain" id="PRO_0000197759" description="Blue-sensitive opsin">
    <location>
        <begin position="1"/>
        <end position="361"/>
    </location>
</feature>
<feature type="topological domain" description="Extracellular">
    <location>
        <begin position="1"/>
        <end position="43"/>
    </location>
</feature>
<feature type="transmembrane region" description="Helical; Name=1" evidence="2">
    <location>
        <begin position="44"/>
        <end position="68"/>
    </location>
</feature>
<feature type="topological domain" description="Cytoplasmic">
    <location>
        <begin position="69"/>
        <end position="80"/>
    </location>
</feature>
<feature type="transmembrane region" description="Helical; Name=2" evidence="2">
    <location>
        <begin position="81"/>
        <end position="106"/>
    </location>
</feature>
<feature type="topological domain" description="Extracellular">
    <location>
        <begin position="107"/>
        <end position="120"/>
    </location>
</feature>
<feature type="transmembrane region" description="Helical; Name=3" evidence="2">
    <location>
        <begin position="121"/>
        <end position="140"/>
    </location>
</feature>
<feature type="topological domain" description="Cytoplasmic">
    <location>
        <begin position="141"/>
        <end position="159"/>
    </location>
</feature>
<feature type="transmembrane region" description="Helical; Name=4" evidence="2">
    <location>
        <begin position="160"/>
        <end position="183"/>
    </location>
</feature>
<feature type="topological domain" description="Extracellular">
    <location>
        <begin position="184"/>
        <end position="209"/>
    </location>
</feature>
<feature type="transmembrane region" description="Helical; Name=5" evidence="2">
    <location>
        <begin position="210"/>
        <end position="237"/>
    </location>
</feature>
<feature type="topological domain" description="Cytoplasmic">
    <location>
        <begin position="238"/>
        <end position="259"/>
    </location>
</feature>
<feature type="transmembrane region" description="Helical; Name=6" evidence="2">
    <location>
        <begin position="260"/>
        <end position="283"/>
    </location>
</feature>
<feature type="topological domain" description="Extracellular">
    <location>
        <begin position="284"/>
        <end position="291"/>
    </location>
</feature>
<feature type="transmembrane region" description="Helical; Name=7" evidence="2">
    <location>
        <begin position="292"/>
        <end position="316"/>
    </location>
</feature>
<feature type="topological domain" description="Cytoplasmic">
    <location>
        <begin position="317"/>
        <end position="361"/>
    </location>
</feature>
<feature type="region of interest" description="Disordered" evidence="4">
    <location>
        <begin position="338"/>
        <end position="361"/>
    </location>
</feature>
<feature type="compositionally biased region" description="Low complexity" evidence="4">
    <location>
        <begin position="342"/>
        <end position="361"/>
    </location>
</feature>
<feature type="modified residue" description="N6-(retinylidene)lysine" evidence="1">
    <location>
        <position position="303"/>
    </location>
</feature>
<feature type="glycosylation site" description="N-linked (GlcNAc...) asparagine" evidence="5">
    <location>
        <position position="24"/>
    </location>
</feature>
<feature type="disulfide bond" evidence="3">
    <location>
        <begin position="117"/>
        <end position="194"/>
    </location>
</feature>